<evidence type="ECO:0000250" key="1"/>
<evidence type="ECO:0000250" key="2">
    <source>
        <dbReference type="UniProtKB" id="P01588"/>
    </source>
</evidence>
<evidence type="ECO:0000255" key="3"/>
<evidence type="ECO:0000305" key="4"/>
<keyword id="KW-1015">Disulfide bond</keyword>
<keyword id="KW-0265">Erythrocyte maturation</keyword>
<keyword id="KW-0325">Glycoprotein</keyword>
<keyword id="KW-0372">Hormone</keyword>
<keyword id="KW-1185">Reference proteome</keyword>
<keyword id="KW-0964">Secreted</keyword>
<keyword id="KW-0732">Signal</keyword>
<reference key="1">
    <citation type="journal article" date="2004" name="Proc. Natl. Acad. Sci. U.S.A.">
        <title>Hypoxic stress tolerance of the blind subterranean mole rat: expression of erythropoietin and hypoxia-inducible factor 1 alpha.</title>
        <authorList>
            <person name="Shams I."/>
            <person name="Avivi A."/>
            <person name="Eviatar N."/>
        </authorList>
    </citation>
    <scope>NUCLEOTIDE SEQUENCE [GENOMIC DNA]</scope>
    <source>
        <tissue>Liver</tissue>
    </source>
</reference>
<comment type="function">
    <text evidence="2">Hormone involved in the regulation of erythrocyte proliferation and differentiation and the maintenance of a physiological level of circulating erythrocyte mass. Binds to EPOR leading to EPOR dimerization and JAK2 activation thereby activating specific downstream effectors, including STAT1 and STAT3.</text>
</comment>
<comment type="subcellular location">
    <subcellularLocation>
        <location evidence="1">Secreted</location>
    </subcellularLocation>
</comment>
<comment type="similarity">
    <text evidence="4">Belongs to the EPO/TPO family.</text>
</comment>
<organism>
    <name type="scientific">Nannospalax galili</name>
    <name type="common">Northern Israeli blind subterranean mole rat</name>
    <name type="synonym">Spalax galili</name>
    <dbReference type="NCBI Taxonomy" id="1026970"/>
    <lineage>
        <taxon>Eukaryota</taxon>
        <taxon>Metazoa</taxon>
        <taxon>Chordata</taxon>
        <taxon>Craniata</taxon>
        <taxon>Vertebrata</taxon>
        <taxon>Euteleostomi</taxon>
        <taxon>Mammalia</taxon>
        <taxon>Eutheria</taxon>
        <taxon>Euarchontoglires</taxon>
        <taxon>Glires</taxon>
        <taxon>Rodentia</taxon>
        <taxon>Myomorpha</taxon>
        <taxon>Muroidea</taxon>
        <taxon>Spalacidae</taxon>
        <taxon>Spalacinae</taxon>
        <taxon>Nannospalax</taxon>
    </lineage>
</organism>
<gene>
    <name type="primary">EPO</name>
</gene>
<dbReference type="EMBL" id="AJ715795">
    <property type="protein sequence ID" value="CAG29400.1"/>
    <property type="molecule type" value="Genomic_DNA"/>
</dbReference>
<dbReference type="RefSeq" id="XP_008830557.1">
    <property type="nucleotide sequence ID" value="XM_008832335.1"/>
</dbReference>
<dbReference type="SMR" id="Q6H8S9"/>
<dbReference type="GlyCosmos" id="Q6H8S9">
    <property type="glycosylation" value="3 sites, No reported glycans"/>
</dbReference>
<dbReference type="Ensembl" id="ENSNGAT00000025363.1">
    <property type="protein sequence ID" value="ENSNGAP00000019700.1"/>
    <property type="gene ID" value="ENSNGAG00000019436.1"/>
</dbReference>
<dbReference type="KEGG" id="ngi:103733506"/>
<dbReference type="GeneTree" id="ENSGT00390000017226"/>
<dbReference type="OMA" id="AMEFPRL"/>
<dbReference type="Proteomes" id="UP000694381">
    <property type="component" value="Unassembled WGS sequence"/>
</dbReference>
<dbReference type="GO" id="GO:0009986">
    <property type="term" value="C:cell surface"/>
    <property type="evidence" value="ECO:0007669"/>
    <property type="project" value="Ensembl"/>
</dbReference>
<dbReference type="GO" id="GO:0005615">
    <property type="term" value="C:extracellular space"/>
    <property type="evidence" value="ECO:0007669"/>
    <property type="project" value="Ensembl"/>
</dbReference>
<dbReference type="GO" id="GO:0005125">
    <property type="term" value="F:cytokine activity"/>
    <property type="evidence" value="ECO:0007669"/>
    <property type="project" value="Ensembl"/>
</dbReference>
<dbReference type="GO" id="GO:0005128">
    <property type="term" value="F:erythropoietin receptor binding"/>
    <property type="evidence" value="ECO:0007669"/>
    <property type="project" value="Ensembl"/>
</dbReference>
<dbReference type="GO" id="GO:0005179">
    <property type="term" value="F:hormone activity"/>
    <property type="evidence" value="ECO:0007669"/>
    <property type="project" value="UniProtKB-KW"/>
</dbReference>
<dbReference type="GO" id="GO:0030295">
    <property type="term" value="F:protein kinase activator activity"/>
    <property type="evidence" value="ECO:0007669"/>
    <property type="project" value="Ensembl"/>
</dbReference>
<dbReference type="GO" id="GO:0097696">
    <property type="term" value="P:cell surface receptor signaling pathway via STAT"/>
    <property type="evidence" value="ECO:0007669"/>
    <property type="project" value="Ensembl"/>
</dbReference>
<dbReference type="GO" id="GO:0071474">
    <property type="term" value="P:cellular hyperosmotic response"/>
    <property type="evidence" value="ECO:0007669"/>
    <property type="project" value="Ensembl"/>
</dbReference>
<dbReference type="GO" id="GO:0007566">
    <property type="term" value="P:embryo implantation"/>
    <property type="evidence" value="ECO:0007669"/>
    <property type="project" value="Ensembl"/>
</dbReference>
<dbReference type="GO" id="GO:0043249">
    <property type="term" value="P:erythrocyte maturation"/>
    <property type="evidence" value="ECO:0007669"/>
    <property type="project" value="UniProtKB-KW"/>
</dbReference>
<dbReference type="GO" id="GO:0038162">
    <property type="term" value="P:erythropoietin-mediated signaling pathway"/>
    <property type="evidence" value="ECO:0007669"/>
    <property type="project" value="Ensembl"/>
</dbReference>
<dbReference type="GO" id="GO:0042541">
    <property type="term" value="P:hemoglobin biosynthetic process"/>
    <property type="evidence" value="ECO:0007669"/>
    <property type="project" value="Ensembl"/>
</dbReference>
<dbReference type="GO" id="GO:0033028">
    <property type="term" value="P:myeloid cell apoptotic process"/>
    <property type="evidence" value="ECO:0007669"/>
    <property type="project" value="Ensembl"/>
</dbReference>
<dbReference type="GO" id="GO:0010523">
    <property type="term" value="P:negative regulation of calcium ion transport into cytosol"/>
    <property type="evidence" value="ECO:0007669"/>
    <property type="project" value="Ensembl"/>
</dbReference>
<dbReference type="GO" id="GO:1902251">
    <property type="term" value="P:negative regulation of erythrocyte apoptotic process"/>
    <property type="evidence" value="ECO:0007669"/>
    <property type="project" value="Ensembl"/>
</dbReference>
<dbReference type="GO" id="GO:1902219">
    <property type="term" value="P:negative regulation of intrinsic apoptotic signaling pathway in response to osmotic stress"/>
    <property type="evidence" value="ECO:0007669"/>
    <property type="project" value="Ensembl"/>
</dbReference>
<dbReference type="GO" id="GO:0000122">
    <property type="term" value="P:negative regulation of transcription by RNA polymerase II"/>
    <property type="evidence" value="ECO:0007669"/>
    <property type="project" value="Ensembl"/>
</dbReference>
<dbReference type="GO" id="GO:0008284">
    <property type="term" value="P:positive regulation of cell population proliferation"/>
    <property type="evidence" value="ECO:0007669"/>
    <property type="project" value="Ensembl"/>
</dbReference>
<dbReference type="GO" id="GO:0045893">
    <property type="term" value="P:positive regulation of DNA-templated transcription"/>
    <property type="evidence" value="ECO:0007669"/>
    <property type="project" value="Ensembl"/>
</dbReference>
<dbReference type="GO" id="GO:0046579">
    <property type="term" value="P:positive regulation of Ras protein signal transduction"/>
    <property type="evidence" value="ECO:0007669"/>
    <property type="project" value="Ensembl"/>
</dbReference>
<dbReference type="GO" id="GO:0001666">
    <property type="term" value="P:response to hypoxia"/>
    <property type="evidence" value="ECO:0007669"/>
    <property type="project" value="Ensembl"/>
</dbReference>
<dbReference type="FunFam" id="1.20.1250.10:FF:000013">
    <property type="entry name" value="Erythropoietin"/>
    <property type="match status" value="1"/>
</dbReference>
<dbReference type="Gene3D" id="1.20.1250.10">
    <property type="match status" value="1"/>
</dbReference>
<dbReference type="InterPro" id="IPR009079">
    <property type="entry name" value="4_helix_cytokine-like_core"/>
</dbReference>
<dbReference type="InterPro" id="IPR019767">
    <property type="entry name" value="EPO/TPO_CS"/>
</dbReference>
<dbReference type="InterPro" id="IPR001323">
    <property type="entry name" value="EPO_TPO"/>
</dbReference>
<dbReference type="InterPro" id="IPR003013">
    <property type="entry name" value="Erythroptn"/>
</dbReference>
<dbReference type="PANTHER" id="PTHR10370">
    <property type="entry name" value="ERYTHROPOIETIN"/>
    <property type="match status" value="1"/>
</dbReference>
<dbReference type="PANTHER" id="PTHR10370:SF0">
    <property type="entry name" value="ERYTHROPOIETIN"/>
    <property type="match status" value="1"/>
</dbReference>
<dbReference type="Pfam" id="PF00758">
    <property type="entry name" value="EPO_TPO"/>
    <property type="match status" value="1"/>
</dbReference>
<dbReference type="PIRSF" id="PIRSF001951">
    <property type="entry name" value="EPO"/>
    <property type="match status" value="1"/>
</dbReference>
<dbReference type="PRINTS" id="PR00272">
    <property type="entry name" value="ERYTHROPTN"/>
</dbReference>
<dbReference type="SUPFAM" id="SSF47266">
    <property type="entry name" value="4-helical cytokines"/>
    <property type="match status" value="1"/>
</dbReference>
<dbReference type="PROSITE" id="PS00817">
    <property type="entry name" value="EPO_TPO"/>
    <property type="match status" value="1"/>
</dbReference>
<accession>Q6H8S9</accession>
<protein>
    <recommendedName>
        <fullName>Erythropoietin</fullName>
    </recommendedName>
</protein>
<name>EPO_NANGA</name>
<proteinExistence type="inferred from homology"/>
<feature type="signal peptide" evidence="3">
    <location>
        <begin position="1"/>
        <end position="26"/>
    </location>
</feature>
<feature type="chain" id="PRO_0000256701" description="Erythropoietin">
    <location>
        <begin position="27"/>
        <end position="192"/>
    </location>
</feature>
<feature type="glycosylation site" description="N-linked (GlcNAc...) asparagine" evidence="3">
    <location>
        <position position="50"/>
    </location>
</feature>
<feature type="glycosylation site" description="N-linked (GlcNAc...) asparagine" evidence="3">
    <location>
        <position position="64"/>
    </location>
</feature>
<feature type="glycosylation site" description="N-linked (GlcNAc...) asparagine" evidence="3">
    <location>
        <position position="109"/>
    </location>
</feature>
<feature type="disulfide bond" evidence="1">
    <location>
        <begin position="33"/>
        <end position="187"/>
    </location>
</feature>
<sequence>MGVPDCLALPLLVTFLLLSLGLPVLGAPPRLICDSRVLERYILEAKEAENITMGCAEGPRFNENFTVPDTKVNFYAWKTMGVEEQAVEVWQGLSLLFEAILRAQAVLANSSQPSEMLQLHVDKAISGLRSLTSLLRALGAQKEAISPPDTTQVIPLRRFTVDTFCKLFRIYSNFLRGKLKLYTGEACRRGDR</sequence>